<gene>
    <name evidence="1" type="primary">rimM</name>
    <name type="ordered locus">amb4064</name>
</gene>
<protein>
    <recommendedName>
        <fullName evidence="1">Ribosome maturation factor RimM</fullName>
    </recommendedName>
</protein>
<proteinExistence type="inferred from homology"/>
<accession>Q2VZV7</accession>
<dbReference type="EMBL" id="AP007255">
    <property type="protein sequence ID" value="BAE52868.1"/>
    <property type="molecule type" value="Genomic_DNA"/>
</dbReference>
<dbReference type="RefSeq" id="WP_011386415.1">
    <property type="nucleotide sequence ID" value="NC_007626.1"/>
</dbReference>
<dbReference type="SMR" id="Q2VZV7"/>
<dbReference type="STRING" id="342108.amb4064"/>
<dbReference type="KEGG" id="mag:amb4064"/>
<dbReference type="HOGENOM" id="CLU_077636_0_1_5"/>
<dbReference type="OrthoDB" id="9788191at2"/>
<dbReference type="Proteomes" id="UP000007058">
    <property type="component" value="Chromosome"/>
</dbReference>
<dbReference type="GO" id="GO:0005737">
    <property type="term" value="C:cytoplasm"/>
    <property type="evidence" value="ECO:0007669"/>
    <property type="project" value="UniProtKB-SubCell"/>
</dbReference>
<dbReference type="GO" id="GO:0005840">
    <property type="term" value="C:ribosome"/>
    <property type="evidence" value="ECO:0007669"/>
    <property type="project" value="InterPro"/>
</dbReference>
<dbReference type="GO" id="GO:0043022">
    <property type="term" value="F:ribosome binding"/>
    <property type="evidence" value="ECO:0007669"/>
    <property type="project" value="InterPro"/>
</dbReference>
<dbReference type="GO" id="GO:0042274">
    <property type="term" value="P:ribosomal small subunit biogenesis"/>
    <property type="evidence" value="ECO:0007669"/>
    <property type="project" value="UniProtKB-UniRule"/>
</dbReference>
<dbReference type="GO" id="GO:0006364">
    <property type="term" value="P:rRNA processing"/>
    <property type="evidence" value="ECO:0007669"/>
    <property type="project" value="UniProtKB-UniRule"/>
</dbReference>
<dbReference type="Gene3D" id="2.30.30.240">
    <property type="entry name" value="PRC-barrel domain"/>
    <property type="match status" value="1"/>
</dbReference>
<dbReference type="Gene3D" id="2.40.30.60">
    <property type="entry name" value="RimM"/>
    <property type="match status" value="1"/>
</dbReference>
<dbReference type="HAMAP" id="MF_00014">
    <property type="entry name" value="Ribosome_mat_RimM"/>
    <property type="match status" value="1"/>
</dbReference>
<dbReference type="InterPro" id="IPR011033">
    <property type="entry name" value="PRC_barrel-like_sf"/>
</dbReference>
<dbReference type="InterPro" id="IPR056792">
    <property type="entry name" value="PRC_RimM"/>
</dbReference>
<dbReference type="InterPro" id="IPR011961">
    <property type="entry name" value="RimM"/>
</dbReference>
<dbReference type="InterPro" id="IPR002676">
    <property type="entry name" value="RimM_N"/>
</dbReference>
<dbReference type="InterPro" id="IPR036976">
    <property type="entry name" value="RimM_N_sf"/>
</dbReference>
<dbReference type="InterPro" id="IPR009000">
    <property type="entry name" value="Transl_B-barrel_sf"/>
</dbReference>
<dbReference type="NCBIfam" id="TIGR02273">
    <property type="entry name" value="16S_RimM"/>
    <property type="match status" value="1"/>
</dbReference>
<dbReference type="PANTHER" id="PTHR33692">
    <property type="entry name" value="RIBOSOME MATURATION FACTOR RIMM"/>
    <property type="match status" value="1"/>
</dbReference>
<dbReference type="PANTHER" id="PTHR33692:SF1">
    <property type="entry name" value="RIBOSOME MATURATION FACTOR RIMM"/>
    <property type="match status" value="1"/>
</dbReference>
<dbReference type="Pfam" id="PF24986">
    <property type="entry name" value="PRC_RimM"/>
    <property type="match status" value="1"/>
</dbReference>
<dbReference type="Pfam" id="PF01782">
    <property type="entry name" value="RimM"/>
    <property type="match status" value="1"/>
</dbReference>
<dbReference type="SUPFAM" id="SSF50346">
    <property type="entry name" value="PRC-barrel domain"/>
    <property type="match status" value="1"/>
</dbReference>
<dbReference type="SUPFAM" id="SSF50447">
    <property type="entry name" value="Translation proteins"/>
    <property type="match status" value="1"/>
</dbReference>
<name>RIMM_PARM1</name>
<comment type="function">
    <text evidence="1">An accessory protein needed during the final step in the assembly of 30S ribosomal subunit, possibly for assembly of the head region. Essential for efficient processing of 16S rRNA. May be needed both before and after RbfA during the maturation of 16S rRNA. It has affinity for free ribosomal 30S subunits but not for 70S ribosomes.</text>
</comment>
<comment type="subunit">
    <text evidence="1">Binds ribosomal protein uS19.</text>
</comment>
<comment type="subcellular location">
    <subcellularLocation>
        <location evidence="1">Cytoplasm</location>
    </subcellularLocation>
</comment>
<comment type="domain">
    <text evidence="1">The PRC barrel domain binds ribosomal protein uS19.</text>
</comment>
<comment type="similarity">
    <text evidence="1">Belongs to the RimM family.</text>
</comment>
<organism>
    <name type="scientific">Paramagnetospirillum magneticum (strain ATCC 700264 / AMB-1)</name>
    <name type="common">Magnetospirillum magneticum</name>
    <dbReference type="NCBI Taxonomy" id="342108"/>
    <lineage>
        <taxon>Bacteria</taxon>
        <taxon>Pseudomonadati</taxon>
        <taxon>Pseudomonadota</taxon>
        <taxon>Alphaproteobacteria</taxon>
        <taxon>Rhodospirillales</taxon>
        <taxon>Magnetospirillaceae</taxon>
        <taxon>Paramagnetospirillum</taxon>
    </lineage>
</organism>
<feature type="chain" id="PRO_0000244137" description="Ribosome maturation factor RimM">
    <location>
        <begin position="1"/>
        <end position="176"/>
    </location>
</feature>
<feature type="domain" description="PRC barrel" evidence="1">
    <location>
        <begin position="92"/>
        <end position="165"/>
    </location>
</feature>
<sequence>MGPRVRVGVIVGVHGVRGAVRIKSFTEDPADIGFYSPVENEAGSIKYRLKVTGEVKGLVIATLDGIGDRDAAEALKGTELWVARERLPRLAEDEFLYSDLIGLVAEGVDGKRLGIVKAVADYGAGDVLDIKLEPKGDMMVPFTQASVPEVDIAGGRLVVVPPVYAPDENEEKSGGA</sequence>
<reference key="1">
    <citation type="journal article" date="2005" name="DNA Res.">
        <title>Complete genome sequence of the facultative anaerobic magnetotactic bacterium Magnetospirillum sp. strain AMB-1.</title>
        <authorList>
            <person name="Matsunaga T."/>
            <person name="Okamura Y."/>
            <person name="Fukuda Y."/>
            <person name="Wahyudi A.T."/>
            <person name="Murase Y."/>
            <person name="Takeyama H."/>
        </authorList>
    </citation>
    <scope>NUCLEOTIDE SEQUENCE [LARGE SCALE GENOMIC DNA]</scope>
    <source>
        <strain>ATCC 700264 / AMB-1</strain>
    </source>
</reference>
<keyword id="KW-0143">Chaperone</keyword>
<keyword id="KW-0963">Cytoplasm</keyword>
<keyword id="KW-0690">Ribosome biogenesis</keyword>
<keyword id="KW-0698">rRNA processing</keyword>
<evidence type="ECO:0000255" key="1">
    <source>
        <dbReference type="HAMAP-Rule" id="MF_00014"/>
    </source>
</evidence>